<accession>F1DBB2</accession>
<proteinExistence type="inferred from homology"/>
<keyword id="KW-0129">CBS domain</keyword>
<keyword id="KW-0963">Cytoplasm</keyword>
<keyword id="KW-0332">GMP biosynthesis</keyword>
<keyword id="KW-0479">Metal-binding</keyword>
<keyword id="KW-0520">NAD</keyword>
<keyword id="KW-0560">Oxidoreductase</keyword>
<keyword id="KW-0630">Potassium</keyword>
<keyword id="KW-0658">Purine biosynthesis</keyword>
<keyword id="KW-0677">Repeat</keyword>
<gene>
    <name evidence="5" type="primary">mpaF</name>
</gene>
<comment type="function">
    <text evidence="1 3 4">Catalyzes the conversion of inosine 5'-phosphate (IMP) to xanthosine 5'-phosphate (XMP), the first committed and rate-limiting step in the de novo synthesis of guanine nucleotides, and therefore plays an important role in the regulation of cell growth (By similarity). Part of the gene cluster that mediates the biosynthesis of mycophenolic acid (MPA), the first isolated antibiotic natural product in the world (PubMed:21398490). Does not play a role in the biosynthesis of MPA, but is involved in self resistance to MPA, since MPA acts as an inhibitor of IMP dehydrogenases (PubMed:21923907).</text>
</comment>
<comment type="catalytic activity">
    <reaction evidence="1">
        <text>IMP + NAD(+) + H2O = XMP + NADH + H(+)</text>
        <dbReference type="Rhea" id="RHEA:11708"/>
        <dbReference type="ChEBI" id="CHEBI:15377"/>
        <dbReference type="ChEBI" id="CHEBI:15378"/>
        <dbReference type="ChEBI" id="CHEBI:57464"/>
        <dbReference type="ChEBI" id="CHEBI:57540"/>
        <dbReference type="ChEBI" id="CHEBI:57945"/>
        <dbReference type="ChEBI" id="CHEBI:58053"/>
        <dbReference type="EC" id="1.1.1.205"/>
    </reaction>
</comment>
<comment type="cofactor">
    <cofactor evidence="1">
        <name>K(+)</name>
        <dbReference type="ChEBI" id="CHEBI:29103"/>
    </cofactor>
</comment>
<comment type="activity regulation">
    <text evidence="1">Mycophenolic acid (MPA) is a non-competitive inhibitor that prevents formation of the closed enzyme conformation by binding to the same site as the amobile flap. In contrast, mizoribine monophosphate (MZP) is a competitive inhibitor that induces the closed conformation. MPA is a potent inhibitor of mammalian IMPDHs but a poor inhibitor of the bacterial enzymes. MZP is a more potent inhibitor of bacterial IMPDH.</text>
</comment>
<comment type="pathway">
    <text evidence="1">Purine metabolism; XMP biosynthesis via de novo pathway; XMP from IMP: step 1/1.</text>
</comment>
<comment type="subunit">
    <text evidence="1">Homotetramer.</text>
</comment>
<comment type="subcellular location">
    <subcellularLocation>
        <location evidence="1">Cytoplasm</location>
    </subcellularLocation>
</comment>
<comment type="similarity">
    <text evidence="1">Belongs to the IMPDH/GMPR family.</text>
</comment>
<evidence type="ECO:0000255" key="1">
    <source>
        <dbReference type="HAMAP-Rule" id="MF_03156"/>
    </source>
</evidence>
<evidence type="ECO:0000256" key="2">
    <source>
        <dbReference type="SAM" id="MobiDB-lite"/>
    </source>
</evidence>
<evidence type="ECO:0000269" key="3">
    <source>
    </source>
</evidence>
<evidence type="ECO:0000269" key="4">
    <source>
    </source>
</evidence>
<evidence type="ECO:0000303" key="5">
    <source>
    </source>
</evidence>
<evidence type="ECO:0000312" key="6">
    <source>
        <dbReference type="EMBL" id="ADY00133.1"/>
    </source>
</evidence>
<sequence>MVEILDYTKALEVLKEYPSGDGLHVDTLLDSDNHGALTYNDFLILPGSITFSAADVSLDTKVTRRFTIKAPLLSSPMDTVTEHNMAIHMALLGGLGVIHNNCPPDDQAEMVRKVKRYENGFILDPVVLSPSTTVAEAKELKTKWNFGGFPVTEKGTLHSKLLGIVTSRDIQFHKTPEDPVTAVMSTDLVTAPAGTTLAEANEVLRSSKKGKLPIVDKDGLLVSLLSRSDLMKNIHYPLASKLPSKQLLCAAAISTHDADKVRLQKLVDAGLDIVVVDSSQGNSMYQIAMIKWIKSTFPDIDIIAGNIVTREQAAALIAAGADGLRIGMGSGSACITQEVMAVGRPQAASVRSVSAFAARFGVPTIADGGVQNLGHIVKGLALGASAVMMGSLLAGTTESPGEYYVSNEGQLVKAFRGMGSIAVMEDKGKSGGGKNAGASRYFSENDKVKVAQGVAGSVVDRGSITQYVPYLVAGIQHSLQDIGVQDLEALHTGVNNGQVRFEMRSASAQTEGNVHGLHSHEKKLYSS</sequence>
<organism evidence="6">
    <name type="scientific">Penicillium brevicompactum</name>
    <dbReference type="NCBI Taxonomy" id="5074"/>
    <lineage>
        <taxon>Eukaryota</taxon>
        <taxon>Fungi</taxon>
        <taxon>Dikarya</taxon>
        <taxon>Ascomycota</taxon>
        <taxon>Pezizomycotina</taxon>
        <taxon>Eurotiomycetes</taxon>
        <taxon>Eurotiomycetidae</taxon>
        <taxon>Eurotiales</taxon>
        <taxon>Aspergillaceae</taxon>
        <taxon>Penicillium</taxon>
    </lineage>
</organism>
<name>MPAF_PENBR</name>
<protein>
    <recommendedName>
        <fullName evidence="1">Inosine-5'-monophosphate dehydrogenase</fullName>
        <shortName evidence="1">IMP dehydrogenase</shortName>
        <shortName evidence="1">IMPD</shortName>
        <shortName evidence="1">IMPDH</shortName>
        <ecNumber evidence="1">1.1.1.205</ecNumber>
    </recommendedName>
    <alternativeName>
        <fullName evidence="5">Mycophenolic acid biosynthesis cluster protein F</fullName>
    </alternativeName>
</protein>
<reference key="1">
    <citation type="journal article" date="2011" name="Appl. Environ. Microbiol.">
        <title>Molecular basis for mycophenolic acid biosynthesis in Penicillium brevicompactum.</title>
        <authorList>
            <person name="Regueira T.B."/>
            <person name="Kildegaard K.R."/>
            <person name="Hansen B.G."/>
            <person name="Mortensen U.H."/>
            <person name="Hertweck C."/>
            <person name="Nielsen J."/>
        </authorList>
    </citation>
    <scope>NUCLEOTIDE SEQUENCE [GENOMIC DNA]</scope>
    <scope>FUNCTION</scope>
    <source>
        <strain>IBT 23078</strain>
    </source>
</reference>
<reference key="2">
    <citation type="journal article" date="2011" name="BMC Microbiol.">
        <title>A new class of IMP dehydrogenase with a role in self-resistance of mycophenolic acid producing fungi.</title>
        <authorList>
            <person name="Hansen B.G."/>
            <person name="Genee H.J."/>
            <person name="Kaas C.S."/>
            <person name="Nielsen J.B."/>
            <person name="Regueira T.B."/>
            <person name="Mortensen U.H."/>
            <person name="Frisvad J.C."/>
            <person name="Patil K.R."/>
        </authorList>
    </citation>
    <scope>FUNCTION</scope>
</reference>
<feature type="chain" id="PRO_0000436574" description="Inosine-5'-monophosphate dehydrogenase">
    <location>
        <begin position="1"/>
        <end position="527"/>
    </location>
</feature>
<feature type="domain" description="CBS 1" evidence="1">
    <location>
        <begin position="121"/>
        <end position="183"/>
    </location>
</feature>
<feature type="domain" description="CBS 2" evidence="1">
    <location>
        <begin position="184"/>
        <end position="240"/>
    </location>
</feature>
<feature type="region of interest" description="Disordered" evidence="2">
    <location>
        <begin position="506"/>
        <end position="527"/>
    </location>
</feature>
<feature type="compositionally biased region" description="Basic and acidic residues" evidence="2">
    <location>
        <begin position="518"/>
        <end position="527"/>
    </location>
</feature>
<feature type="active site" description="Thioimidate intermediate" evidence="1">
    <location>
        <position position="334"/>
    </location>
</feature>
<feature type="active site" description="Proton acceptor" evidence="1">
    <location>
        <position position="440"/>
    </location>
</feature>
<feature type="binding site" evidence="1">
    <location>
        <begin position="277"/>
        <end position="279"/>
    </location>
    <ligand>
        <name>NAD(+)</name>
        <dbReference type="ChEBI" id="CHEBI:57540"/>
    </ligand>
</feature>
<feature type="binding site" evidence="1">
    <location>
        <begin position="327"/>
        <end position="329"/>
    </location>
    <ligand>
        <name>NAD(+)</name>
        <dbReference type="ChEBI" id="CHEBI:57540"/>
    </ligand>
</feature>
<feature type="binding site" description="in other chain" evidence="1">
    <location>
        <position position="329"/>
    </location>
    <ligand>
        <name>K(+)</name>
        <dbReference type="ChEBI" id="CHEBI:29103"/>
        <note>ligand shared between two tetrameric partners</note>
    </ligand>
</feature>
<feature type="binding site" description="in other chain" evidence="1">
    <location>
        <position position="331"/>
    </location>
    <ligand>
        <name>K(+)</name>
        <dbReference type="ChEBI" id="CHEBI:29103"/>
        <note>ligand shared between two tetrameric partners</note>
    </ligand>
</feature>
<feature type="binding site" evidence="1">
    <location>
        <position position="332"/>
    </location>
    <ligand>
        <name>IMP</name>
        <dbReference type="ChEBI" id="CHEBI:58053"/>
    </ligand>
</feature>
<feature type="binding site" description="in other chain" evidence="1">
    <location>
        <position position="334"/>
    </location>
    <ligand>
        <name>K(+)</name>
        <dbReference type="ChEBI" id="CHEBI:29103"/>
        <note>ligand shared between two tetrameric partners</note>
    </ligand>
</feature>
<feature type="binding site" evidence="1">
    <location>
        <begin position="367"/>
        <end position="369"/>
    </location>
    <ligand>
        <name>IMP</name>
        <dbReference type="ChEBI" id="CHEBI:58053"/>
    </ligand>
</feature>
<feature type="binding site" evidence="1">
    <location>
        <begin position="390"/>
        <end position="391"/>
    </location>
    <ligand>
        <name>IMP</name>
        <dbReference type="ChEBI" id="CHEBI:58053"/>
    </ligand>
</feature>
<feature type="binding site" evidence="1">
    <location>
        <position position="452"/>
    </location>
    <ligand>
        <name>IMP</name>
        <dbReference type="ChEBI" id="CHEBI:58053"/>
    </ligand>
</feature>
<feature type="binding site" evidence="1">
    <location>
        <position position="511"/>
    </location>
    <ligand>
        <name>K(+)</name>
        <dbReference type="ChEBI" id="CHEBI:29103"/>
        <note>ligand shared between two tetrameric partners</note>
    </ligand>
</feature>
<feature type="binding site" evidence="1">
    <location>
        <position position="512"/>
    </location>
    <ligand>
        <name>K(+)</name>
        <dbReference type="ChEBI" id="CHEBI:29103"/>
        <note>ligand shared between two tetrameric partners</note>
    </ligand>
</feature>
<dbReference type="EC" id="1.1.1.205" evidence="1"/>
<dbReference type="EMBL" id="HQ731031">
    <property type="protein sequence ID" value="ADY00133.1"/>
    <property type="molecule type" value="Genomic_DNA"/>
</dbReference>
<dbReference type="SMR" id="F1DBB2"/>
<dbReference type="BRENDA" id="1.1.1.205">
    <property type="organism ID" value="4601"/>
</dbReference>
<dbReference type="UniPathway" id="UPA00601">
    <property type="reaction ID" value="UER00295"/>
</dbReference>
<dbReference type="GO" id="GO:0005737">
    <property type="term" value="C:cytoplasm"/>
    <property type="evidence" value="ECO:0007669"/>
    <property type="project" value="UniProtKB-SubCell"/>
</dbReference>
<dbReference type="GO" id="GO:0003938">
    <property type="term" value="F:IMP dehydrogenase activity"/>
    <property type="evidence" value="ECO:0007669"/>
    <property type="project" value="UniProtKB-UniRule"/>
</dbReference>
<dbReference type="GO" id="GO:0046872">
    <property type="term" value="F:metal ion binding"/>
    <property type="evidence" value="ECO:0007669"/>
    <property type="project" value="UniProtKB-UniRule"/>
</dbReference>
<dbReference type="GO" id="GO:0000166">
    <property type="term" value="F:nucleotide binding"/>
    <property type="evidence" value="ECO:0007669"/>
    <property type="project" value="UniProtKB-UniRule"/>
</dbReference>
<dbReference type="GO" id="GO:0006177">
    <property type="term" value="P:GMP biosynthetic process"/>
    <property type="evidence" value="ECO:0007669"/>
    <property type="project" value="UniProtKB-UniRule"/>
</dbReference>
<dbReference type="GO" id="GO:0006183">
    <property type="term" value="P:GTP biosynthetic process"/>
    <property type="evidence" value="ECO:0007669"/>
    <property type="project" value="TreeGrafter"/>
</dbReference>
<dbReference type="GO" id="GO:0140729">
    <property type="term" value="P:self-resistance to endogenously produced metabolite"/>
    <property type="evidence" value="ECO:0000314"/>
    <property type="project" value="GO_Central"/>
</dbReference>
<dbReference type="CDD" id="cd04601">
    <property type="entry name" value="CBS_pair_IMPDH"/>
    <property type="match status" value="1"/>
</dbReference>
<dbReference type="CDD" id="cd00381">
    <property type="entry name" value="IMPDH"/>
    <property type="match status" value="1"/>
</dbReference>
<dbReference type="FunFam" id="3.20.20.70:FF:000007">
    <property type="entry name" value="Chromosome 19 SCAF14664, whole genome shotgun sequence"/>
    <property type="match status" value="1"/>
</dbReference>
<dbReference type="Gene3D" id="3.20.20.70">
    <property type="entry name" value="Aldolase class I"/>
    <property type="match status" value="1"/>
</dbReference>
<dbReference type="HAMAP" id="MF_01964">
    <property type="entry name" value="IMPDH"/>
    <property type="match status" value="1"/>
</dbReference>
<dbReference type="InterPro" id="IPR013785">
    <property type="entry name" value="Aldolase_TIM"/>
</dbReference>
<dbReference type="InterPro" id="IPR000644">
    <property type="entry name" value="CBS_dom"/>
</dbReference>
<dbReference type="InterPro" id="IPR046342">
    <property type="entry name" value="CBS_dom_sf"/>
</dbReference>
<dbReference type="InterPro" id="IPR005990">
    <property type="entry name" value="IMP_DH"/>
</dbReference>
<dbReference type="InterPro" id="IPR015875">
    <property type="entry name" value="IMP_DH/GMP_Rdtase_CS"/>
</dbReference>
<dbReference type="InterPro" id="IPR001093">
    <property type="entry name" value="IMP_DH_GMPRt"/>
</dbReference>
<dbReference type="NCBIfam" id="TIGR01302">
    <property type="entry name" value="IMP_dehydrog"/>
    <property type="match status" value="1"/>
</dbReference>
<dbReference type="PANTHER" id="PTHR11911:SF111">
    <property type="entry name" value="INOSINE-5'-MONOPHOSPHATE DEHYDROGENASE"/>
    <property type="match status" value="1"/>
</dbReference>
<dbReference type="PANTHER" id="PTHR11911">
    <property type="entry name" value="INOSINE-5-MONOPHOSPHATE DEHYDROGENASE RELATED"/>
    <property type="match status" value="1"/>
</dbReference>
<dbReference type="Pfam" id="PF00571">
    <property type="entry name" value="CBS"/>
    <property type="match status" value="2"/>
</dbReference>
<dbReference type="Pfam" id="PF00478">
    <property type="entry name" value="IMPDH"/>
    <property type="match status" value="1"/>
</dbReference>
<dbReference type="PIRSF" id="PIRSF000130">
    <property type="entry name" value="IMPDH"/>
    <property type="match status" value="1"/>
</dbReference>
<dbReference type="SMART" id="SM00116">
    <property type="entry name" value="CBS"/>
    <property type="match status" value="2"/>
</dbReference>
<dbReference type="SMART" id="SM01240">
    <property type="entry name" value="IMPDH"/>
    <property type="match status" value="1"/>
</dbReference>
<dbReference type="SUPFAM" id="SSF54631">
    <property type="entry name" value="CBS-domain pair"/>
    <property type="match status" value="1"/>
</dbReference>
<dbReference type="SUPFAM" id="SSF51412">
    <property type="entry name" value="Inosine monophosphate dehydrogenase (IMPDH)"/>
    <property type="match status" value="1"/>
</dbReference>
<dbReference type="PROSITE" id="PS51371">
    <property type="entry name" value="CBS"/>
    <property type="match status" value="2"/>
</dbReference>
<dbReference type="PROSITE" id="PS00487">
    <property type="entry name" value="IMP_DH_GMP_RED"/>
    <property type="match status" value="1"/>
</dbReference>